<dbReference type="EC" id="2.7.7.6" evidence="1"/>
<dbReference type="EMBL" id="CP001025">
    <property type="protein sequence ID" value="ACB62803.1"/>
    <property type="molecule type" value="Genomic_DNA"/>
</dbReference>
<dbReference type="RefSeq" id="WP_006477176.1">
    <property type="nucleotide sequence ID" value="NC_010551.1"/>
</dbReference>
<dbReference type="SMR" id="B1YRQ5"/>
<dbReference type="GeneID" id="98107134"/>
<dbReference type="KEGG" id="bac:BamMC406_0302"/>
<dbReference type="HOGENOM" id="CLU_053084_0_0_4"/>
<dbReference type="OrthoDB" id="9805706at2"/>
<dbReference type="Proteomes" id="UP000001680">
    <property type="component" value="Chromosome 1"/>
</dbReference>
<dbReference type="GO" id="GO:0005737">
    <property type="term" value="C:cytoplasm"/>
    <property type="evidence" value="ECO:0007669"/>
    <property type="project" value="UniProtKB-ARBA"/>
</dbReference>
<dbReference type="GO" id="GO:0000428">
    <property type="term" value="C:DNA-directed RNA polymerase complex"/>
    <property type="evidence" value="ECO:0007669"/>
    <property type="project" value="UniProtKB-KW"/>
</dbReference>
<dbReference type="GO" id="GO:0003677">
    <property type="term" value="F:DNA binding"/>
    <property type="evidence" value="ECO:0007669"/>
    <property type="project" value="UniProtKB-UniRule"/>
</dbReference>
<dbReference type="GO" id="GO:0003899">
    <property type="term" value="F:DNA-directed RNA polymerase activity"/>
    <property type="evidence" value="ECO:0007669"/>
    <property type="project" value="UniProtKB-UniRule"/>
</dbReference>
<dbReference type="GO" id="GO:0046983">
    <property type="term" value="F:protein dimerization activity"/>
    <property type="evidence" value="ECO:0007669"/>
    <property type="project" value="InterPro"/>
</dbReference>
<dbReference type="GO" id="GO:0006351">
    <property type="term" value="P:DNA-templated transcription"/>
    <property type="evidence" value="ECO:0007669"/>
    <property type="project" value="UniProtKB-UniRule"/>
</dbReference>
<dbReference type="CDD" id="cd06928">
    <property type="entry name" value="RNAP_alpha_NTD"/>
    <property type="match status" value="1"/>
</dbReference>
<dbReference type="FunFam" id="1.10.150.20:FF:000001">
    <property type="entry name" value="DNA-directed RNA polymerase subunit alpha"/>
    <property type="match status" value="1"/>
</dbReference>
<dbReference type="FunFam" id="2.170.120.12:FF:000001">
    <property type="entry name" value="DNA-directed RNA polymerase subunit alpha"/>
    <property type="match status" value="1"/>
</dbReference>
<dbReference type="Gene3D" id="1.10.150.20">
    <property type="entry name" value="5' to 3' exonuclease, C-terminal subdomain"/>
    <property type="match status" value="1"/>
</dbReference>
<dbReference type="Gene3D" id="2.170.120.12">
    <property type="entry name" value="DNA-directed RNA polymerase, insert domain"/>
    <property type="match status" value="1"/>
</dbReference>
<dbReference type="Gene3D" id="3.30.1360.10">
    <property type="entry name" value="RNA polymerase, RBP11-like subunit"/>
    <property type="match status" value="1"/>
</dbReference>
<dbReference type="HAMAP" id="MF_00059">
    <property type="entry name" value="RNApol_bact_RpoA"/>
    <property type="match status" value="1"/>
</dbReference>
<dbReference type="InterPro" id="IPR011262">
    <property type="entry name" value="DNA-dir_RNA_pol_insert"/>
</dbReference>
<dbReference type="InterPro" id="IPR011263">
    <property type="entry name" value="DNA-dir_RNA_pol_RpoA/D/Rpb3"/>
</dbReference>
<dbReference type="InterPro" id="IPR011773">
    <property type="entry name" value="DNA-dir_RpoA"/>
</dbReference>
<dbReference type="InterPro" id="IPR036603">
    <property type="entry name" value="RBP11-like"/>
</dbReference>
<dbReference type="InterPro" id="IPR011260">
    <property type="entry name" value="RNAP_asu_C"/>
</dbReference>
<dbReference type="InterPro" id="IPR036643">
    <property type="entry name" value="RNApol_insert_sf"/>
</dbReference>
<dbReference type="NCBIfam" id="NF003513">
    <property type="entry name" value="PRK05182.1-2"/>
    <property type="match status" value="1"/>
</dbReference>
<dbReference type="NCBIfam" id="NF003519">
    <property type="entry name" value="PRK05182.2-5"/>
    <property type="match status" value="1"/>
</dbReference>
<dbReference type="NCBIfam" id="TIGR02027">
    <property type="entry name" value="rpoA"/>
    <property type="match status" value="1"/>
</dbReference>
<dbReference type="Pfam" id="PF01000">
    <property type="entry name" value="RNA_pol_A_bac"/>
    <property type="match status" value="1"/>
</dbReference>
<dbReference type="Pfam" id="PF03118">
    <property type="entry name" value="RNA_pol_A_CTD"/>
    <property type="match status" value="1"/>
</dbReference>
<dbReference type="Pfam" id="PF01193">
    <property type="entry name" value="RNA_pol_L"/>
    <property type="match status" value="1"/>
</dbReference>
<dbReference type="SMART" id="SM00662">
    <property type="entry name" value="RPOLD"/>
    <property type="match status" value="1"/>
</dbReference>
<dbReference type="SUPFAM" id="SSF47789">
    <property type="entry name" value="C-terminal domain of RNA polymerase alpha subunit"/>
    <property type="match status" value="1"/>
</dbReference>
<dbReference type="SUPFAM" id="SSF56553">
    <property type="entry name" value="Insert subdomain of RNA polymerase alpha subunit"/>
    <property type="match status" value="1"/>
</dbReference>
<dbReference type="SUPFAM" id="SSF55257">
    <property type="entry name" value="RBP11-like subunits of RNA polymerase"/>
    <property type="match status" value="1"/>
</dbReference>
<reference key="1">
    <citation type="submission" date="2008-04" db="EMBL/GenBank/DDBJ databases">
        <title>Complete sequence of chromosome 1 of Burkholderia ambifaria MC40-6.</title>
        <authorList>
            <person name="Copeland A."/>
            <person name="Lucas S."/>
            <person name="Lapidus A."/>
            <person name="Glavina del Rio T."/>
            <person name="Dalin E."/>
            <person name="Tice H."/>
            <person name="Pitluck S."/>
            <person name="Chain P."/>
            <person name="Malfatti S."/>
            <person name="Shin M."/>
            <person name="Vergez L."/>
            <person name="Lang D."/>
            <person name="Schmutz J."/>
            <person name="Larimer F."/>
            <person name="Land M."/>
            <person name="Hauser L."/>
            <person name="Kyrpides N."/>
            <person name="Lykidis A."/>
            <person name="Ramette A."/>
            <person name="Konstantinidis K."/>
            <person name="Tiedje J."/>
            <person name="Richardson P."/>
        </authorList>
    </citation>
    <scope>NUCLEOTIDE SEQUENCE [LARGE SCALE GENOMIC DNA]</scope>
    <source>
        <strain>MC40-6</strain>
    </source>
</reference>
<protein>
    <recommendedName>
        <fullName evidence="1">DNA-directed RNA polymerase subunit alpha</fullName>
        <shortName evidence="1">RNAP subunit alpha</shortName>
        <ecNumber evidence="1">2.7.7.6</ecNumber>
    </recommendedName>
    <alternativeName>
        <fullName evidence="1">RNA polymerase subunit alpha</fullName>
    </alternativeName>
    <alternativeName>
        <fullName evidence="1">Transcriptase subunit alpha</fullName>
    </alternativeName>
</protein>
<name>RPOA_BURA4</name>
<feature type="chain" id="PRO_1000091925" description="DNA-directed RNA polymerase subunit alpha">
    <location>
        <begin position="1"/>
        <end position="325"/>
    </location>
</feature>
<feature type="region of interest" description="Alpha N-terminal domain (alpha-NTD)" evidence="1">
    <location>
        <begin position="1"/>
        <end position="231"/>
    </location>
</feature>
<feature type="region of interest" description="Alpha C-terminal domain (alpha-CTD)" evidence="1">
    <location>
        <begin position="246"/>
        <end position="325"/>
    </location>
</feature>
<accession>B1YRQ5</accession>
<sequence>MQTSLLKPKIIAVESLGENHARVVMEPFERGYGHTLGNALRRVLLSSMVGYAPTEVTIAGVVHEYSTLDGVQEDVVNLLLNLKGVVFKLHNRDEVTVTLRKEGEGVVTAGDIELAHDCEVINPNHVIAHLSKGGKLDVQIKIEKGRGYVPGNVRRYGEDTAKIIGRIVLDASFSPVRRVSYAVESARVEQRTDLDKLVMNIETSGVITPEEAIRQSARILVDQLSVFAALEGTETAAEAPSRAPQIDPILLRPVDDLELTVRSANCLKAENIYYIGDLIQRTENELLKTPNLGRKSLNEIKEVLASRGLTLGMKLENWPPAGLDK</sequence>
<keyword id="KW-0240">DNA-directed RNA polymerase</keyword>
<keyword id="KW-0548">Nucleotidyltransferase</keyword>
<keyword id="KW-0804">Transcription</keyword>
<keyword id="KW-0808">Transferase</keyword>
<comment type="function">
    <text evidence="1">DNA-dependent RNA polymerase catalyzes the transcription of DNA into RNA using the four ribonucleoside triphosphates as substrates.</text>
</comment>
<comment type="catalytic activity">
    <reaction evidence="1">
        <text>RNA(n) + a ribonucleoside 5'-triphosphate = RNA(n+1) + diphosphate</text>
        <dbReference type="Rhea" id="RHEA:21248"/>
        <dbReference type="Rhea" id="RHEA-COMP:14527"/>
        <dbReference type="Rhea" id="RHEA-COMP:17342"/>
        <dbReference type="ChEBI" id="CHEBI:33019"/>
        <dbReference type="ChEBI" id="CHEBI:61557"/>
        <dbReference type="ChEBI" id="CHEBI:140395"/>
        <dbReference type="EC" id="2.7.7.6"/>
    </reaction>
</comment>
<comment type="subunit">
    <text evidence="1">Homodimer. The RNAP catalytic core consists of 2 alpha, 1 beta, 1 beta' and 1 omega subunit. When a sigma factor is associated with the core the holoenzyme is formed, which can initiate transcription.</text>
</comment>
<comment type="domain">
    <text evidence="1">The N-terminal domain is essential for RNAP assembly and basal transcription, whereas the C-terminal domain is involved in interaction with transcriptional regulators and with upstream promoter elements.</text>
</comment>
<comment type="similarity">
    <text evidence="1">Belongs to the RNA polymerase alpha chain family.</text>
</comment>
<gene>
    <name evidence="1" type="primary">rpoA</name>
    <name type="ordered locus">BamMC406_0302</name>
</gene>
<organism>
    <name type="scientific">Burkholderia ambifaria (strain MC40-6)</name>
    <dbReference type="NCBI Taxonomy" id="398577"/>
    <lineage>
        <taxon>Bacteria</taxon>
        <taxon>Pseudomonadati</taxon>
        <taxon>Pseudomonadota</taxon>
        <taxon>Betaproteobacteria</taxon>
        <taxon>Burkholderiales</taxon>
        <taxon>Burkholderiaceae</taxon>
        <taxon>Burkholderia</taxon>
        <taxon>Burkholderia cepacia complex</taxon>
    </lineage>
</organism>
<proteinExistence type="inferred from homology"/>
<evidence type="ECO:0000255" key="1">
    <source>
        <dbReference type="HAMAP-Rule" id="MF_00059"/>
    </source>
</evidence>